<accession>Q9Z410</accession>
<protein>
    <recommendedName>
        <fullName>Phosphate-specific transport system accessory protein PhoU homolog</fullName>
        <shortName>Pst system accessory protein PhoU homolog</shortName>
    </recommendedName>
</protein>
<keyword id="KW-0963">Cytoplasm</keyword>
<keyword id="KW-0592">Phosphate transport</keyword>
<keyword id="KW-0813">Transport</keyword>
<sequence>MINKESLTHHISQQFNAELEEVRSHLLAMGGLVEKQVNDAVTALIEADSGLAQQVREVDEQINQMERNIDEECVRILARRQPAASDLRLIISISKSVIDLERIGDEATKIARRAIQLCEEGESPRGYVEVRHIGDQVRNMVRDALDAFARFDADLALSVAQYDKTIDREYKTALRELVTYMMEDPRSISRVLSVIWALRSLERIGDHARNISELVIYLVRGTDVRHMGLKRMTAEVQGTAVADAEKANVPGESDDK</sequence>
<reference key="1">
    <citation type="journal article" date="1999" name="J. Biosci. Bioeng.">
        <title>Cloning and characterization of Pseudomonas putida genes encoding the phosphate-specific transport system.</title>
        <authorList>
            <person name="Wu H."/>
            <person name="Kosaka H."/>
            <person name="Kato J."/>
            <person name="Kuroda A."/>
            <person name="Ikeda T."/>
            <person name="Takiguchi N."/>
            <person name="Ohtake H."/>
        </authorList>
    </citation>
    <scope>NUCLEOTIDE SEQUENCE [GENOMIC DNA]</scope>
    <source>
        <strain>PRS2000</strain>
    </source>
</reference>
<organism>
    <name type="scientific">Pseudomonas putida</name>
    <name type="common">Arthrobacter siderocapsulatus</name>
    <dbReference type="NCBI Taxonomy" id="303"/>
    <lineage>
        <taxon>Bacteria</taxon>
        <taxon>Pseudomonadati</taxon>
        <taxon>Pseudomonadota</taxon>
        <taxon>Gammaproteobacteria</taxon>
        <taxon>Pseudomonadales</taxon>
        <taxon>Pseudomonadaceae</taxon>
        <taxon>Pseudomonas</taxon>
    </lineage>
</organism>
<dbReference type="EMBL" id="AB017356">
    <property type="protein sequence ID" value="BAA75658.1"/>
    <property type="molecule type" value="Genomic_DNA"/>
</dbReference>
<dbReference type="PIR" id="T43869">
    <property type="entry name" value="T43869"/>
</dbReference>
<dbReference type="RefSeq" id="WP_016502252.1">
    <property type="nucleotide sequence ID" value="NZ_UGUX01000003.1"/>
</dbReference>
<dbReference type="SMR" id="Q9Z410"/>
<dbReference type="GeneID" id="45526858"/>
<dbReference type="eggNOG" id="COG0704">
    <property type="taxonomic scope" value="Bacteria"/>
</dbReference>
<dbReference type="GO" id="GO:0005737">
    <property type="term" value="C:cytoplasm"/>
    <property type="evidence" value="ECO:0000250"/>
    <property type="project" value="UniProtKB"/>
</dbReference>
<dbReference type="GO" id="GO:0042803">
    <property type="term" value="F:protein homodimerization activity"/>
    <property type="evidence" value="ECO:0000250"/>
    <property type="project" value="UniProtKB"/>
</dbReference>
<dbReference type="GO" id="GO:0030643">
    <property type="term" value="P:intracellular phosphate ion homeostasis"/>
    <property type="evidence" value="ECO:0007669"/>
    <property type="project" value="InterPro"/>
</dbReference>
<dbReference type="GO" id="GO:0045936">
    <property type="term" value="P:negative regulation of phosphate metabolic process"/>
    <property type="evidence" value="ECO:0000250"/>
    <property type="project" value="UniProtKB"/>
</dbReference>
<dbReference type="GO" id="GO:2000186">
    <property type="term" value="P:negative regulation of phosphate transmembrane transport"/>
    <property type="evidence" value="ECO:0000250"/>
    <property type="project" value="UniProtKB"/>
</dbReference>
<dbReference type="GO" id="GO:0006817">
    <property type="term" value="P:phosphate ion transport"/>
    <property type="evidence" value="ECO:0007669"/>
    <property type="project" value="UniProtKB-KW"/>
</dbReference>
<dbReference type="FunFam" id="1.20.58.220:FF:000001">
    <property type="entry name" value="Phosphate-specific transport system accessory protein PhoU"/>
    <property type="match status" value="1"/>
</dbReference>
<dbReference type="FunFam" id="1.20.58.220:FF:000002">
    <property type="entry name" value="Phosphate-specific transport system accessory protein PhoU"/>
    <property type="match status" value="1"/>
</dbReference>
<dbReference type="Gene3D" id="1.20.58.220">
    <property type="entry name" value="Phosphate transport system protein phou homolog 2, domain 2"/>
    <property type="match status" value="2"/>
</dbReference>
<dbReference type="InterPro" id="IPR028366">
    <property type="entry name" value="P_transport_PhoU"/>
</dbReference>
<dbReference type="InterPro" id="IPR038078">
    <property type="entry name" value="PhoU-like_sf"/>
</dbReference>
<dbReference type="InterPro" id="IPR026022">
    <property type="entry name" value="PhoU_dom"/>
</dbReference>
<dbReference type="NCBIfam" id="TIGR02135">
    <property type="entry name" value="phoU_full"/>
    <property type="match status" value="1"/>
</dbReference>
<dbReference type="PANTHER" id="PTHR42930">
    <property type="entry name" value="PHOSPHATE-SPECIFIC TRANSPORT SYSTEM ACCESSORY PROTEIN PHOU"/>
    <property type="match status" value="1"/>
</dbReference>
<dbReference type="PANTHER" id="PTHR42930:SF3">
    <property type="entry name" value="PHOSPHATE-SPECIFIC TRANSPORT SYSTEM ACCESSORY PROTEIN PHOU"/>
    <property type="match status" value="1"/>
</dbReference>
<dbReference type="Pfam" id="PF01895">
    <property type="entry name" value="PhoU"/>
    <property type="match status" value="2"/>
</dbReference>
<dbReference type="PIRSF" id="PIRSF003107">
    <property type="entry name" value="PhoU"/>
    <property type="match status" value="1"/>
</dbReference>
<dbReference type="SUPFAM" id="SSF109755">
    <property type="entry name" value="PhoU-like"/>
    <property type="match status" value="1"/>
</dbReference>
<evidence type="ECO:0000250" key="1"/>
<evidence type="ECO:0000305" key="2"/>
<feature type="chain" id="PRO_0000155176" description="Phosphate-specific transport system accessory protein PhoU homolog">
    <location>
        <begin position="1"/>
        <end position="256"/>
    </location>
</feature>
<gene>
    <name type="primary">phoU</name>
</gene>
<name>PHOU_PSEPU</name>
<proteinExistence type="inferred from homology"/>
<comment type="function">
    <text evidence="1">Plays a role in the regulation of phosphate uptake.</text>
</comment>
<comment type="subunit">
    <text evidence="1">Homodimer.</text>
</comment>
<comment type="subcellular location">
    <subcellularLocation>
        <location evidence="1">Cytoplasm</location>
    </subcellularLocation>
</comment>
<comment type="similarity">
    <text evidence="2">Belongs to the PhoU family.</text>
</comment>